<accession>O47143</accession>
<name>MATK_CALVU</name>
<comment type="function">
    <text evidence="1">Usually encoded in the trnK tRNA gene intron. Probably assists in splicing its own and other chloroplast group II introns.</text>
</comment>
<comment type="subcellular location">
    <subcellularLocation>
        <location>Plastid</location>
        <location>Chloroplast</location>
    </subcellularLocation>
</comment>
<comment type="similarity">
    <text evidence="1">Belongs to the intron maturase 2 family. MatK subfamily.</text>
</comment>
<reference key="1">
    <citation type="journal article" date="1997" name="Am. J. Bot.">
        <title>Phylogenetics relationships of Rhododendroideae (Ericaceae).</title>
        <authorList>
            <person name="Kron K.A."/>
        </authorList>
    </citation>
    <scope>NUCLEOTIDE SEQUENCE [GENOMIC DNA]</scope>
</reference>
<proteinExistence type="inferred from homology"/>
<keyword id="KW-0150">Chloroplast</keyword>
<keyword id="KW-0507">mRNA processing</keyword>
<keyword id="KW-0934">Plastid</keyword>
<keyword id="KW-0694">RNA-binding</keyword>
<keyword id="KW-0819">tRNA processing</keyword>
<evidence type="ECO:0000255" key="1">
    <source>
        <dbReference type="HAMAP-Rule" id="MF_01390"/>
    </source>
</evidence>
<sequence length="506" mass="60573">MEEFKINLERDRSQQHDFIYPLIFQEYIYAFAHDRGLKRSIFLENAGYDNKSSLLIVKRLITHLITQIYQQNHFLFSVNDSKQNKIFGYNTHFYSQRIFEGFAIVVEIPFYLRLVSFLEDKERVKSQNLGSIHSIFPFLEDQFSHLNYVLDILIPHPIHLEILVQTLRYWVKDASSLHLLRFFLYDYPILNSLIIPKKSSFSISKINQRFFLFLYNFHVWEYESIFVFLRTQSSHLRLISSETFLERISFYQKIELEVFTNEFKAILWDFKEPFMHYVRYRGKAILASKGTSLLMNKWKYYLVNFWQCYFYMWSQPKRICINQLSNHSLDFMSYLSSVRLQLLMVRSKMIENSFLIENASKKFDTLMPITPMIGYLSKAKFCNVLGHPVSKPVWADLSDSDIIDRFGRIYRNISHYHSGSLKKTSLYRIKYILRLSCARTLARKHKSTVRAFLKRLGVGLLEEFFTEEEQVFYLTFPKVSSTSGKLYRRKIWYLDIICINDLANYE</sequence>
<feature type="chain" id="PRO_0000143297" description="Maturase K">
    <location>
        <begin position="1"/>
        <end position="506"/>
    </location>
</feature>
<organism>
    <name type="scientific">Calluna vulgaris</name>
    <name type="common">Heather</name>
    <name type="synonym">Erica vulgaris</name>
    <dbReference type="NCBI Taxonomy" id="13385"/>
    <lineage>
        <taxon>Eukaryota</taxon>
        <taxon>Viridiplantae</taxon>
        <taxon>Streptophyta</taxon>
        <taxon>Embryophyta</taxon>
        <taxon>Tracheophyta</taxon>
        <taxon>Spermatophyta</taxon>
        <taxon>Magnoliopsida</taxon>
        <taxon>eudicotyledons</taxon>
        <taxon>Gunneridae</taxon>
        <taxon>Pentapetalae</taxon>
        <taxon>asterids</taxon>
        <taxon>Ericales</taxon>
        <taxon>Ericaceae</taxon>
        <taxon>Ericoideae</taxon>
        <taxon>Ericeae</taxon>
        <taxon>Calluna</taxon>
    </lineage>
</organism>
<gene>
    <name evidence="1" type="primary">matK</name>
</gene>
<protein>
    <recommendedName>
        <fullName evidence="1">Maturase K</fullName>
    </recommendedName>
    <alternativeName>
        <fullName evidence="1">Intron maturase</fullName>
    </alternativeName>
</protein>
<geneLocation type="chloroplast"/>
<dbReference type="EMBL" id="U61326">
    <property type="protein sequence ID" value="AAB93715.1"/>
    <property type="molecule type" value="Genomic_DNA"/>
</dbReference>
<dbReference type="GO" id="GO:0009507">
    <property type="term" value="C:chloroplast"/>
    <property type="evidence" value="ECO:0007669"/>
    <property type="project" value="UniProtKB-SubCell"/>
</dbReference>
<dbReference type="GO" id="GO:0003723">
    <property type="term" value="F:RNA binding"/>
    <property type="evidence" value="ECO:0007669"/>
    <property type="project" value="UniProtKB-KW"/>
</dbReference>
<dbReference type="GO" id="GO:0006397">
    <property type="term" value="P:mRNA processing"/>
    <property type="evidence" value="ECO:0007669"/>
    <property type="project" value="UniProtKB-KW"/>
</dbReference>
<dbReference type="GO" id="GO:0008380">
    <property type="term" value="P:RNA splicing"/>
    <property type="evidence" value="ECO:0007669"/>
    <property type="project" value="UniProtKB-UniRule"/>
</dbReference>
<dbReference type="GO" id="GO:0008033">
    <property type="term" value="P:tRNA processing"/>
    <property type="evidence" value="ECO:0007669"/>
    <property type="project" value="UniProtKB-KW"/>
</dbReference>
<dbReference type="HAMAP" id="MF_01390">
    <property type="entry name" value="MatK"/>
    <property type="match status" value="1"/>
</dbReference>
<dbReference type="InterPro" id="IPR024937">
    <property type="entry name" value="Domain_X"/>
</dbReference>
<dbReference type="InterPro" id="IPR002866">
    <property type="entry name" value="Maturase_MatK"/>
</dbReference>
<dbReference type="InterPro" id="IPR024942">
    <property type="entry name" value="Maturase_MatK_N"/>
</dbReference>
<dbReference type="PANTHER" id="PTHR34811">
    <property type="entry name" value="MATURASE K"/>
    <property type="match status" value="1"/>
</dbReference>
<dbReference type="PANTHER" id="PTHR34811:SF1">
    <property type="entry name" value="MATURASE K"/>
    <property type="match status" value="1"/>
</dbReference>
<dbReference type="Pfam" id="PF01348">
    <property type="entry name" value="Intron_maturas2"/>
    <property type="match status" value="1"/>
</dbReference>
<dbReference type="Pfam" id="PF01824">
    <property type="entry name" value="MatK_N"/>
    <property type="match status" value="1"/>
</dbReference>